<accession>Q4A8H2</accession>
<feature type="chain" id="PRO_0000242397" description="Large ribosomal subunit protein uL4">
    <location>
        <begin position="1"/>
        <end position="214"/>
    </location>
</feature>
<feature type="region of interest" description="Disordered" evidence="2">
    <location>
        <begin position="56"/>
        <end position="86"/>
    </location>
</feature>
<feature type="compositionally biased region" description="Basic residues" evidence="2">
    <location>
        <begin position="71"/>
        <end position="85"/>
    </location>
</feature>
<comment type="function">
    <text evidence="1">One of the primary rRNA binding proteins, this protein initially binds near the 5'-end of the 23S rRNA. It is important during the early stages of 50S assembly. It makes multiple contacts with different domains of the 23S rRNA in the assembled 50S subunit and ribosome.</text>
</comment>
<comment type="function">
    <text evidence="1">Forms part of the polypeptide exit tunnel.</text>
</comment>
<comment type="subunit">
    <text evidence="1">Part of the 50S ribosomal subunit.</text>
</comment>
<comment type="similarity">
    <text evidence="1">Belongs to the universal ribosomal protein uL4 family.</text>
</comment>
<gene>
    <name evidence="1" type="primary">rplD</name>
    <name type="ordered locus">MHP7448_0193</name>
</gene>
<reference key="1">
    <citation type="journal article" date="2005" name="J. Bacteriol.">
        <title>Swine and poultry pathogens: the complete genome sequences of two strains of Mycoplasma hyopneumoniae and a strain of Mycoplasma synoviae.</title>
        <authorList>
            <person name="Vasconcelos A.T.R."/>
            <person name="Ferreira H.B."/>
            <person name="Bizarro C.V."/>
            <person name="Bonatto S.L."/>
            <person name="Carvalho M.O."/>
            <person name="Pinto P.M."/>
            <person name="Almeida D.F."/>
            <person name="Almeida L.G.P."/>
            <person name="Almeida R."/>
            <person name="Alves-Junior L."/>
            <person name="Assuncao E.N."/>
            <person name="Azevedo V.A.C."/>
            <person name="Bogo M.R."/>
            <person name="Brigido M.M."/>
            <person name="Brocchi M."/>
            <person name="Burity H.A."/>
            <person name="Camargo A.A."/>
            <person name="Camargo S.S."/>
            <person name="Carepo M.S."/>
            <person name="Carraro D.M."/>
            <person name="de Mattos Cascardo J.C."/>
            <person name="Castro L.A."/>
            <person name="Cavalcanti G."/>
            <person name="Chemale G."/>
            <person name="Collevatti R.G."/>
            <person name="Cunha C.W."/>
            <person name="Dallagiovanna B."/>
            <person name="Dambros B.P."/>
            <person name="Dellagostin O.A."/>
            <person name="Falcao C."/>
            <person name="Fantinatti-Garboggini F."/>
            <person name="Felipe M.S.S."/>
            <person name="Fiorentin L."/>
            <person name="Franco G.R."/>
            <person name="Freitas N.S.A."/>
            <person name="Frias D."/>
            <person name="Grangeiro T.B."/>
            <person name="Grisard E.C."/>
            <person name="Guimaraes C.T."/>
            <person name="Hungria M."/>
            <person name="Jardim S.N."/>
            <person name="Krieger M.A."/>
            <person name="Laurino J.P."/>
            <person name="Lima L.F.A."/>
            <person name="Lopes M.I."/>
            <person name="Loreto E.L.S."/>
            <person name="Madeira H.M.F."/>
            <person name="Manfio G.P."/>
            <person name="Maranhao A.Q."/>
            <person name="Martinkovics C.T."/>
            <person name="Medeiros S.R.B."/>
            <person name="Moreira M.A.M."/>
            <person name="Neiva M."/>
            <person name="Ramalho-Neto C.E."/>
            <person name="Nicolas M.F."/>
            <person name="Oliveira S.C."/>
            <person name="Paixao R.F.C."/>
            <person name="Pedrosa F.O."/>
            <person name="Pena S.D.J."/>
            <person name="Pereira M."/>
            <person name="Pereira-Ferrari L."/>
            <person name="Piffer I."/>
            <person name="Pinto L.S."/>
            <person name="Potrich D.P."/>
            <person name="Salim A.C.M."/>
            <person name="Santos F.R."/>
            <person name="Schmitt R."/>
            <person name="Schneider M.P.C."/>
            <person name="Schrank A."/>
            <person name="Schrank I.S."/>
            <person name="Schuck A.F."/>
            <person name="Seuanez H.N."/>
            <person name="Silva D.W."/>
            <person name="Silva R."/>
            <person name="Silva S.C."/>
            <person name="Soares C.M.A."/>
            <person name="Souza K.R.L."/>
            <person name="Souza R.C."/>
            <person name="Staats C.C."/>
            <person name="Steffens M.B.R."/>
            <person name="Teixeira S.M.R."/>
            <person name="Urmenyi T.P."/>
            <person name="Vainstein M.H."/>
            <person name="Zuccherato L.W."/>
            <person name="Simpson A.J.G."/>
            <person name="Zaha A."/>
        </authorList>
    </citation>
    <scope>NUCLEOTIDE SEQUENCE [LARGE SCALE GENOMIC DNA]</scope>
    <source>
        <strain>7448</strain>
    </source>
</reference>
<dbReference type="EMBL" id="AE017244">
    <property type="protein sequence ID" value="AAZ53567.2"/>
    <property type="molecule type" value="Genomic_DNA"/>
</dbReference>
<dbReference type="RefSeq" id="WP_011206025.1">
    <property type="nucleotide sequence ID" value="NC_007332.1"/>
</dbReference>
<dbReference type="SMR" id="Q4A8H2"/>
<dbReference type="GeneID" id="41334492"/>
<dbReference type="KEGG" id="mhp:MHP7448_0193"/>
<dbReference type="HOGENOM" id="CLU_041575_2_1_14"/>
<dbReference type="Proteomes" id="UP000000553">
    <property type="component" value="Chromosome"/>
</dbReference>
<dbReference type="GO" id="GO:1990904">
    <property type="term" value="C:ribonucleoprotein complex"/>
    <property type="evidence" value="ECO:0007669"/>
    <property type="project" value="UniProtKB-KW"/>
</dbReference>
<dbReference type="GO" id="GO:0005840">
    <property type="term" value="C:ribosome"/>
    <property type="evidence" value="ECO:0007669"/>
    <property type="project" value="UniProtKB-KW"/>
</dbReference>
<dbReference type="GO" id="GO:0019843">
    <property type="term" value="F:rRNA binding"/>
    <property type="evidence" value="ECO:0007669"/>
    <property type="project" value="UniProtKB-UniRule"/>
</dbReference>
<dbReference type="GO" id="GO:0003735">
    <property type="term" value="F:structural constituent of ribosome"/>
    <property type="evidence" value="ECO:0007669"/>
    <property type="project" value="InterPro"/>
</dbReference>
<dbReference type="GO" id="GO:0006412">
    <property type="term" value="P:translation"/>
    <property type="evidence" value="ECO:0007669"/>
    <property type="project" value="UniProtKB-UniRule"/>
</dbReference>
<dbReference type="Gene3D" id="3.40.1370.10">
    <property type="match status" value="1"/>
</dbReference>
<dbReference type="HAMAP" id="MF_01328_B">
    <property type="entry name" value="Ribosomal_uL4_B"/>
    <property type="match status" value="1"/>
</dbReference>
<dbReference type="InterPro" id="IPR002136">
    <property type="entry name" value="Ribosomal_uL4"/>
</dbReference>
<dbReference type="InterPro" id="IPR013005">
    <property type="entry name" value="Ribosomal_uL4-like"/>
</dbReference>
<dbReference type="InterPro" id="IPR023574">
    <property type="entry name" value="Ribosomal_uL4_dom_sf"/>
</dbReference>
<dbReference type="NCBIfam" id="TIGR03953">
    <property type="entry name" value="rplD_bact"/>
    <property type="match status" value="1"/>
</dbReference>
<dbReference type="PANTHER" id="PTHR10746">
    <property type="entry name" value="50S RIBOSOMAL PROTEIN L4"/>
    <property type="match status" value="1"/>
</dbReference>
<dbReference type="PANTHER" id="PTHR10746:SF6">
    <property type="entry name" value="LARGE RIBOSOMAL SUBUNIT PROTEIN UL4M"/>
    <property type="match status" value="1"/>
</dbReference>
<dbReference type="Pfam" id="PF00573">
    <property type="entry name" value="Ribosomal_L4"/>
    <property type="match status" value="1"/>
</dbReference>
<dbReference type="SUPFAM" id="SSF52166">
    <property type="entry name" value="Ribosomal protein L4"/>
    <property type="match status" value="1"/>
</dbReference>
<protein>
    <recommendedName>
        <fullName evidence="1">Large ribosomal subunit protein uL4</fullName>
    </recommendedName>
    <alternativeName>
        <fullName evidence="3">50S ribosomal protein L4</fullName>
    </alternativeName>
</protein>
<keyword id="KW-0687">Ribonucleoprotein</keyword>
<keyword id="KW-0689">Ribosomal protein</keyword>
<keyword id="KW-0694">RNA-binding</keyword>
<keyword id="KW-0699">rRNA-binding</keyword>
<sequence>MNKISEISIQSQKTENLVKFNANDDLPKSLFEQKEPHFQAIFDSILSERASKRLSTHKVKNRAEVSGTGKKPWKQKSTGKARAGSKRSPIFVGGGRAFGPTTQRNYNLKVNKKVKKLAFISALSQLAQNQQILVNDFSMNKISTKLLVDQLKIFKIDQLRHILIASSDPNLFLSARNLPNVELVKTNSLTVESLIKADLLIISKNEITNLEKRI</sequence>
<organism>
    <name type="scientific">Mesomycoplasma hyopneumoniae (strain 7448)</name>
    <name type="common">Mycoplasma hyopneumoniae</name>
    <dbReference type="NCBI Taxonomy" id="262722"/>
    <lineage>
        <taxon>Bacteria</taxon>
        <taxon>Bacillati</taxon>
        <taxon>Mycoplasmatota</taxon>
        <taxon>Mycoplasmoidales</taxon>
        <taxon>Metamycoplasmataceae</taxon>
        <taxon>Mesomycoplasma</taxon>
    </lineage>
</organism>
<evidence type="ECO:0000255" key="1">
    <source>
        <dbReference type="HAMAP-Rule" id="MF_01328"/>
    </source>
</evidence>
<evidence type="ECO:0000256" key="2">
    <source>
        <dbReference type="SAM" id="MobiDB-lite"/>
    </source>
</evidence>
<evidence type="ECO:0000305" key="3"/>
<proteinExistence type="inferred from homology"/>
<name>RL4_MESH7</name>